<gene>
    <name type="primary">Cdca7l</name>
</gene>
<reference key="1">
    <citation type="journal article" date="2005" name="Science">
        <title>The transcriptional landscape of the mammalian genome.</title>
        <authorList>
            <person name="Carninci P."/>
            <person name="Kasukawa T."/>
            <person name="Katayama S."/>
            <person name="Gough J."/>
            <person name="Frith M.C."/>
            <person name="Maeda N."/>
            <person name="Oyama R."/>
            <person name="Ravasi T."/>
            <person name="Lenhard B."/>
            <person name="Wells C."/>
            <person name="Kodzius R."/>
            <person name="Shimokawa K."/>
            <person name="Bajic V.B."/>
            <person name="Brenner S.E."/>
            <person name="Batalov S."/>
            <person name="Forrest A.R."/>
            <person name="Zavolan M."/>
            <person name="Davis M.J."/>
            <person name="Wilming L.G."/>
            <person name="Aidinis V."/>
            <person name="Allen J.E."/>
            <person name="Ambesi-Impiombato A."/>
            <person name="Apweiler R."/>
            <person name="Aturaliya R.N."/>
            <person name="Bailey T.L."/>
            <person name="Bansal M."/>
            <person name="Baxter L."/>
            <person name="Beisel K.W."/>
            <person name="Bersano T."/>
            <person name="Bono H."/>
            <person name="Chalk A.M."/>
            <person name="Chiu K.P."/>
            <person name="Choudhary V."/>
            <person name="Christoffels A."/>
            <person name="Clutterbuck D.R."/>
            <person name="Crowe M.L."/>
            <person name="Dalla E."/>
            <person name="Dalrymple B.P."/>
            <person name="de Bono B."/>
            <person name="Della Gatta G."/>
            <person name="di Bernardo D."/>
            <person name="Down T."/>
            <person name="Engstrom P."/>
            <person name="Fagiolini M."/>
            <person name="Faulkner G."/>
            <person name="Fletcher C.F."/>
            <person name="Fukushima T."/>
            <person name="Furuno M."/>
            <person name="Futaki S."/>
            <person name="Gariboldi M."/>
            <person name="Georgii-Hemming P."/>
            <person name="Gingeras T.R."/>
            <person name="Gojobori T."/>
            <person name="Green R.E."/>
            <person name="Gustincich S."/>
            <person name="Harbers M."/>
            <person name="Hayashi Y."/>
            <person name="Hensch T.K."/>
            <person name="Hirokawa N."/>
            <person name="Hill D."/>
            <person name="Huminiecki L."/>
            <person name="Iacono M."/>
            <person name="Ikeo K."/>
            <person name="Iwama A."/>
            <person name="Ishikawa T."/>
            <person name="Jakt M."/>
            <person name="Kanapin A."/>
            <person name="Katoh M."/>
            <person name="Kawasawa Y."/>
            <person name="Kelso J."/>
            <person name="Kitamura H."/>
            <person name="Kitano H."/>
            <person name="Kollias G."/>
            <person name="Krishnan S.P."/>
            <person name="Kruger A."/>
            <person name="Kummerfeld S.K."/>
            <person name="Kurochkin I.V."/>
            <person name="Lareau L.F."/>
            <person name="Lazarevic D."/>
            <person name="Lipovich L."/>
            <person name="Liu J."/>
            <person name="Liuni S."/>
            <person name="McWilliam S."/>
            <person name="Madan Babu M."/>
            <person name="Madera M."/>
            <person name="Marchionni L."/>
            <person name="Matsuda H."/>
            <person name="Matsuzawa S."/>
            <person name="Miki H."/>
            <person name="Mignone F."/>
            <person name="Miyake S."/>
            <person name="Morris K."/>
            <person name="Mottagui-Tabar S."/>
            <person name="Mulder N."/>
            <person name="Nakano N."/>
            <person name="Nakauchi H."/>
            <person name="Ng P."/>
            <person name="Nilsson R."/>
            <person name="Nishiguchi S."/>
            <person name="Nishikawa S."/>
            <person name="Nori F."/>
            <person name="Ohara O."/>
            <person name="Okazaki Y."/>
            <person name="Orlando V."/>
            <person name="Pang K.C."/>
            <person name="Pavan W.J."/>
            <person name="Pavesi G."/>
            <person name="Pesole G."/>
            <person name="Petrovsky N."/>
            <person name="Piazza S."/>
            <person name="Reed J."/>
            <person name="Reid J.F."/>
            <person name="Ring B.Z."/>
            <person name="Ringwald M."/>
            <person name="Rost B."/>
            <person name="Ruan Y."/>
            <person name="Salzberg S.L."/>
            <person name="Sandelin A."/>
            <person name="Schneider C."/>
            <person name="Schoenbach C."/>
            <person name="Sekiguchi K."/>
            <person name="Semple C.A."/>
            <person name="Seno S."/>
            <person name="Sessa L."/>
            <person name="Sheng Y."/>
            <person name="Shibata Y."/>
            <person name="Shimada H."/>
            <person name="Shimada K."/>
            <person name="Silva D."/>
            <person name="Sinclair B."/>
            <person name="Sperling S."/>
            <person name="Stupka E."/>
            <person name="Sugiura K."/>
            <person name="Sultana R."/>
            <person name="Takenaka Y."/>
            <person name="Taki K."/>
            <person name="Tammoja K."/>
            <person name="Tan S.L."/>
            <person name="Tang S."/>
            <person name="Taylor M.S."/>
            <person name="Tegner J."/>
            <person name="Teichmann S.A."/>
            <person name="Ueda H.R."/>
            <person name="van Nimwegen E."/>
            <person name="Verardo R."/>
            <person name="Wei C.L."/>
            <person name="Yagi K."/>
            <person name="Yamanishi H."/>
            <person name="Zabarovsky E."/>
            <person name="Zhu S."/>
            <person name="Zimmer A."/>
            <person name="Hide W."/>
            <person name="Bult C."/>
            <person name="Grimmond S.M."/>
            <person name="Teasdale R.D."/>
            <person name="Liu E.T."/>
            <person name="Brusic V."/>
            <person name="Quackenbush J."/>
            <person name="Wahlestedt C."/>
            <person name="Mattick J.S."/>
            <person name="Hume D.A."/>
            <person name="Kai C."/>
            <person name="Sasaki D."/>
            <person name="Tomaru Y."/>
            <person name="Fukuda S."/>
            <person name="Kanamori-Katayama M."/>
            <person name="Suzuki M."/>
            <person name="Aoki J."/>
            <person name="Arakawa T."/>
            <person name="Iida J."/>
            <person name="Imamura K."/>
            <person name="Itoh M."/>
            <person name="Kato T."/>
            <person name="Kawaji H."/>
            <person name="Kawagashira N."/>
            <person name="Kawashima T."/>
            <person name="Kojima M."/>
            <person name="Kondo S."/>
            <person name="Konno H."/>
            <person name="Nakano K."/>
            <person name="Ninomiya N."/>
            <person name="Nishio T."/>
            <person name="Okada M."/>
            <person name="Plessy C."/>
            <person name="Shibata K."/>
            <person name="Shiraki T."/>
            <person name="Suzuki S."/>
            <person name="Tagami M."/>
            <person name="Waki K."/>
            <person name="Watahiki A."/>
            <person name="Okamura-Oho Y."/>
            <person name="Suzuki H."/>
            <person name="Kawai J."/>
            <person name="Hayashizaki Y."/>
        </authorList>
    </citation>
    <scope>NUCLEOTIDE SEQUENCE [LARGE SCALE MRNA]</scope>
    <source>
        <strain>C57BL/6J</strain>
        <tissue>Bone marrow</tissue>
    </source>
</reference>
<reference key="2">
    <citation type="journal article" date="2004" name="Genome Res.">
        <title>The status, quality, and expansion of the NIH full-length cDNA project: the Mammalian Gene Collection (MGC).</title>
        <authorList>
            <consortium name="The MGC Project Team"/>
        </authorList>
    </citation>
    <scope>NUCLEOTIDE SEQUENCE [LARGE SCALE MRNA]</scope>
    <source>
        <strain>FVB/N</strain>
        <tissue>Mammary tumor</tissue>
    </source>
</reference>
<reference key="3">
    <citation type="journal article" date="2005" name="Cancer Res.">
        <title>Identification of a novel c-Myc protein interactor, JPO2, with transforming activity in medulloblastoma cells.</title>
        <authorList>
            <person name="Huang A."/>
            <person name="Ho C.S.W."/>
            <person name="Ponzielli R."/>
            <person name="Barsyte-Lovejoy D."/>
            <person name="Bouffet E."/>
            <person name="Picard D."/>
            <person name="Hawkins C.E."/>
            <person name="Penn L.Z."/>
        </authorList>
    </citation>
    <scope>TISSUE SPECIFICITY</scope>
</reference>
<reference key="4">
    <citation type="journal article" date="2006" name="Proc. Natl. Acad. Sci. U.S.A.">
        <title>Monoamine oxidase A and repressor R1 are involved in apoptotic signaling pathway.</title>
        <authorList>
            <person name="Ou X.-M."/>
            <person name="Chen K."/>
            <person name="Shih J.C."/>
        </authorList>
    </citation>
    <scope>FUNCTION</scope>
</reference>
<reference key="5">
    <citation type="journal article" date="2010" name="Cell">
        <title>A tissue-specific atlas of mouse protein phosphorylation and expression.</title>
        <authorList>
            <person name="Huttlin E.L."/>
            <person name="Jedrychowski M.P."/>
            <person name="Elias J.E."/>
            <person name="Goswami T."/>
            <person name="Rad R."/>
            <person name="Beausoleil S.A."/>
            <person name="Villen J."/>
            <person name="Haas W."/>
            <person name="Sowa M.E."/>
            <person name="Gygi S.P."/>
        </authorList>
    </citation>
    <scope>PHOSPHORYLATION [LARGE SCALE ANALYSIS] AT SER-183 AND SER-185</scope>
    <scope>IDENTIFICATION BY MASS SPECTROMETRY [LARGE SCALE ANALYSIS]</scope>
    <source>
        <tissue>Spleen</tissue>
    </source>
</reference>
<protein>
    <recommendedName>
        <fullName>Cell division cycle-associated 7-like protein</fullName>
    </recommendedName>
    <alternativeName>
        <fullName>Transcription factor RAM2</fullName>
    </alternativeName>
</protein>
<dbReference type="EMBL" id="AK149673">
    <property type="protein sequence ID" value="BAE29017.1"/>
    <property type="molecule type" value="mRNA"/>
</dbReference>
<dbReference type="EMBL" id="BC006933">
    <property type="protein sequence ID" value="AAH06933.1"/>
    <property type="molecule type" value="mRNA"/>
</dbReference>
<dbReference type="CCDS" id="CCDS49197.1"/>
<dbReference type="RefSeq" id="NP_666152.1">
    <property type="nucleotide sequence ID" value="NM_146040.2"/>
</dbReference>
<dbReference type="SMR" id="Q922M5"/>
<dbReference type="BioGRID" id="229982">
    <property type="interactions" value="4"/>
</dbReference>
<dbReference type="FunCoup" id="Q922M5">
    <property type="interactions" value="3178"/>
</dbReference>
<dbReference type="STRING" id="10090.ENSMUSP00000021592"/>
<dbReference type="GlyGen" id="Q922M5">
    <property type="glycosylation" value="1 site, 1 N-linked glycan (1 site)"/>
</dbReference>
<dbReference type="iPTMnet" id="Q922M5"/>
<dbReference type="PhosphoSitePlus" id="Q922M5"/>
<dbReference type="jPOST" id="Q922M5"/>
<dbReference type="PaxDb" id="10090-ENSMUSP00000021592"/>
<dbReference type="PeptideAtlas" id="Q922M5"/>
<dbReference type="ProteomicsDB" id="265637"/>
<dbReference type="Pumba" id="Q922M5"/>
<dbReference type="Antibodypedia" id="11993">
    <property type="antibodies" value="254 antibodies from 25 providers"/>
</dbReference>
<dbReference type="DNASU" id="217946"/>
<dbReference type="Ensembl" id="ENSMUST00000021592.16">
    <property type="protein sequence ID" value="ENSMUSP00000021592.10"/>
    <property type="gene ID" value="ENSMUSG00000021175.16"/>
</dbReference>
<dbReference type="GeneID" id="217946"/>
<dbReference type="KEGG" id="mmu:217946"/>
<dbReference type="UCSC" id="uc007pid.1">
    <property type="organism name" value="mouse"/>
</dbReference>
<dbReference type="AGR" id="MGI:2384982"/>
<dbReference type="CTD" id="55536"/>
<dbReference type="MGI" id="MGI:2384982">
    <property type="gene designation" value="Cdca7l"/>
</dbReference>
<dbReference type="VEuPathDB" id="HostDB:ENSMUSG00000021175"/>
<dbReference type="eggNOG" id="ENOG502QWH1">
    <property type="taxonomic scope" value="Eukaryota"/>
</dbReference>
<dbReference type="GeneTree" id="ENSGT00940000159108"/>
<dbReference type="HOGENOM" id="CLU_035988_0_0_1"/>
<dbReference type="InParanoid" id="Q922M5"/>
<dbReference type="OMA" id="DPAWICP"/>
<dbReference type="PhylomeDB" id="Q922M5"/>
<dbReference type="TreeFam" id="TF101076"/>
<dbReference type="BioGRID-ORCS" id="217946">
    <property type="hits" value="3 hits in 77 CRISPR screens"/>
</dbReference>
<dbReference type="ChiTaRS" id="Cdca7l">
    <property type="organism name" value="mouse"/>
</dbReference>
<dbReference type="PRO" id="PR:Q922M5"/>
<dbReference type="Proteomes" id="UP000000589">
    <property type="component" value="Chromosome 12"/>
</dbReference>
<dbReference type="RNAct" id="Q922M5">
    <property type="molecule type" value="protein"/>
</dbReference>
<dbReference type="Bgee" id="ENSMUSG00000021175">
    <property type="expression patterns" value="Expressed in glomerular capsule and 216 other cell types or tissues"/>
</dbReference>
<dbReference type="ExpressionAtlas" id="Q922M5">
    <property type="expression patterns" value="baseline and differential"/>
</dbReference>
<dbReference type="GO" id="GO:0005829">
    <property type="term" value="C:cytosol"/>
    <property type="evidence" value="ECO:0007669"/>
    <property type="project" value="Ensembl"/>
</dbReference>
<dbReference type="GO" id="GO:0001650">
    <property type="term" value="C:fibrillar center"/>
    <property type="evidence" value="ECO:0007669"/>
    <property type="project" value="Ensembl"/>
</dbReference>
<dbReference type="GO" id="GO:0005654">
    <property type="term" value="C:nucleoplasm"/>
    <property type="evidence" value="ECO:0007669"/>
    <property type="project" value="Ensembl"/>
</dbReference>
<dbReference type="GO" id="GO:0005634">
    <property type="term" value="C:nucleus"/>
    <property type="evidence" value="ECO:0000266"/>
    <property type="project" value="MGI"/>
</dbReference>
<dbReference type="GO" id="GO:0008284">
    <property type="term" value="P:positive regulation of cell population proliferation"/>
    <property type="evidence" value="ECO:0000266"/>
    <property type="project" value="MGI"/>
</dbReference>
<dbReference type="GO" id="GO:0006355">
    <property type="term" value="P:regulation of DNA-templated transcription"/>
    <property type="evidence" value="ECO:0007669"/>
    <property type="project" value="InterPro"/>
</dbReference>
<dbReference type="InterPro" id="IPR040221">
    <property type="entry name" value="CDCA7/CDA7L"/>
</dbReference>
<dbReference type="InterPro" id="IPR018866">
    <property type="entry name" value="Znf-4CXXC_R1"/>
</dbReference>
<dbReference type="PANTHER" id="PTHR31169:SF4">
    <property type="entry name" value="CELL DIVISION CYCLE-ASSOCIATED 7-LIKE PROTEIN"/>
    <property type="match status" value="1"/>
</dbReference>
<dbReference type="PANTHER" id="PTHR31169">
    <property type="entry name" value="OS05G0300700 PROTEIN"/>
    <property type="match status" value="1"/>
</dbReference>
<dbReference type="Pfam" id="PF10497">
    <property type="entry name" value="zf-4CXXC_R1"/>
    <property type="match status" value="1"/>
</dbReference>
<feature type="chain" id="PRO_0000249314" description="Cell division cycle-associated 7-like protein">
    <location>
        <begin position="1"/>
        <end position="438"/>
    </location>
</feature>
<feature type="region of interest" description="PSIP1-binding" evidence="1">
    <location>
        <begin position="56"/>
        <end position="115"/>
    </location>
</feature>
<feature type="region of interest" description="Disordered" evidence="3">
    <location>
        <begin position="74"/>
        <end position="199"/>
    </location>
</feature>
<feature type="region of interest" description="MYC-binding" evidence="1">
    <location>
        <begin position="201"/>
        <end position="223"/>
    </location>
</feature>
<feature type="short sequence motif" description="Integrase domain-binding motif 1 (IBM1)" evidence="2">
    <location>
        <begin position="9"/>
        <end position="33"/>
    </location>
</feature>
<feature type="short sequence motif" description="Integrase domain-binding motif 2 (IBM2)" evidence="2">
    <location>
        <begin position="63"/>
        <end position="89"/>
    </location>
</feature>
<feature type="compositionally biased region" description="Acidic residues" evidence="3">
    <location>
        <begin position="75"/>
        <end position="86"/>
    </location>
</feature>
<feature type="compositionally biased region" description="Basic and acidic residues" evidence="3">
    <location>
        <begin position="152"/>
        <end position="167"/>
    </location>
</feature>
<feature type="compositionally biased region" description="Basic residues" evidence="3">
    <location>
        <begin position="168"/>
        <end position="177"/>
    </location>
</feature>
<feature type="modified residue" description="Phosphoserine" evidence="2">
    <location>
        <position position="21"/>
    </location>
</feature>
<feature type="modified residue" description="Phosphothreonine" evidence="2">
    <location>
        <position position="75"/>
    </location>
</feature>
<feature type="modified residue" description="Phosphoserine" evidence="2">
    <location>
        <position position="77"/>
    </location>
</feature>
<feature type="modified residue" description="Phosphothreonine" evidence="2">
    <location>
        <position position="86"/>
    </location>
</feature>
<feature type="modified residue" description="Phosphoserine" evidence="2">
    <location>
        <position position="101"/>
    </location>
</feature>
<feature type="modified residue" description="Phosphoserine" evidence="2">
    <location>
        <position position="104"/>
    </location>
</feature>
<feature type="modified residue" description="Phosphoserine" evidence="2">
    <location>
        <position position="135"/>
    </location>
</feature>
<feature type="modified residue" description="Phosphoserine" evidence="2">
    <location>
        <position position="136"/>
    </location>
</feature>
<feature type="modified residue" description="Phosphoserine" evidence="2">
    <location>
        <position position="159"/>
    </location>
</feature>
<feature type="modified residue" description="Phosphoserine" evidence="6">
    <location>
        <position position="183"/>
    </location>
</feature>
<feature type="modified residue" description="Phosphoserine" evidence="6">
    <location>
        <position position="185"/>
    </location>
</feature>
<feature type="modified residue" description="Phosphoserine" evidence="2">
    <location>
        <position position="249"/>
    </location>
</feature>
<feature type="cross-link" description="Glycyl lysine isopeptide (Lys-Gly) (interchain with G-Cter in SUMO2)" evidence="2">
    <location>
        <position position="210"/>
    </location>
</feature>
<feature type="cross-link" description="Glycyl lysine isopeptide (Lys-Gly) (interchain with G-Cter in SUMO2)" evidence="2">
    <location>
        <position position="213"/>
    </location>
</feature>
<evidence type="ECO:0000250" key="1"/>
<evidence type="ECO:0000250" key="2">
    <source>
        <dbReference type="UniProtKB" id="Q96GN5"/>
    </source>
</evidence>
<evidence type="ECO:0000256" key="3">
    <source>
        <dbReference type="SAM" id="MobiDB-lite"/>
    </source>
</evidence>
<evidence type="ECO:0000269" key="4">
    <source>
    </source>
</evidence>
<evidence type="ECO:0000269" key="5">
    <source>
    </source>
</evidence>
<evidence type="ECO:0007744" key="6">
    <source>
    </source>
</evidence>
<sequence>MELATRSQIPKEVADIFSAPSDDEEFVGFQDDVPMQNLSESCGSLDSRELEKQQNVCFRSKYFTEELRRIFKEDTDSEMEDFEGFTESELNMSSNPELMESELSDSDKAYPVMNDAEEDDEEEAAPRRGRSTRRSSFGLRVAFQFPTKKLARTPDKDSSHLLDSKTDLRRKKSSRQPKGKEDSASDAEDESRAESQENSDALLKRAMNIKENKAMLAQLLAELNSVPDFFPVRTPPSASRRRTPRRAFSEGQITRRMNPTRSARPPEKFALENFTFSATKLTEELYSFRRRKTISGGKCQTYRRHRISSFRSVKDITEEDLENIAITVRDKVYDKVLGNTCHQCRQKTIDTKTVCRNQSCGGVRGQFCGPCLRNRYGEDVRTALLDPKWTCPPCRGICNCSYCRRRDGRCATGILIHLAKFYGYDNVKEYLESLQKQL</sequence>
<comment type="function">
    <text evidence="1 5">Plays a role in transcriptional regulation as a repressor that inhibits monoamine oxidase A (MAOA) activity and gene expression by binding to the promoter. Plays an important oncogenic role in mediating the full transforming effect of MYC in medulloblastoma cells (By similarity). Involved in apoptotic signaling pathways; May act downstream of P38-kinase and BCL-2, but upstream of CASP3/caspase-3 as well as CCND1/cyclin D1 and E2F1.</text>
</comment>
<comment type="subunit">
    <text evidence="2">Interacts with MYC (By similarity). Interacts (via IBM motifs) with PSIP1 (via IBD domain); phosphorylation increases its affinity for PSIP1 (By similarity).</text>
</comment>
<comment type="subcellular location">
    <subcellularLocation>
        <location evidence="1">Cytoplasm</location>
    </subcellularLocation>
    <subcellularLocation>
        <location evidence="1">Nucleus</location>
    </subcellularLocation>
    <text evidence="1">Associates with chromatin. Translocates from cytoplasm to nucleus under dexamethasone induction (By similarity).</text>
</comment>
<comment type="tissue specificity">
    <text evidence="4">Expressed in all tissues but not detected in total brain.</text>
</comment>
<comment type="PTM">
    <text evidence="2">Phosphorylation increases its interaction with PSIP1.</text>
</comment>
<keyword id="KW-0963">Cytoplasm</keyword>
<keyword id="KW-1017">Isopeptide bond</keyword>
<keyword id="KW-0539">Nucleus</keyword>
<keyword id="KW-0597">Phosphoprotein</keyword>
<keyword id="KW-1185">Reference proteome</keyword>
<keyword id="KW-0678">Repressor</keyword>
<keyword id="KW-0804">Transcription</keyword>
<keyword id="KW-0805">Transcription regulation</keyword>
<keyword id="KW-0832">Ubl conjugation</keyword>
<organism>
    <name type="scientific">Mus musculus</name>
    <name type="common">Mouse</name>
    <dbReference type="NCBI Taxonomy" id="10090"/>
    <lineage>
        <taxon>Eukaryota</taxon>
        <taxon>Metazoa</taxon>
        <taxon>Chordata</taxon>
        <taxon>Craniata</taxon>
        <taxon>Vertebrata</taxon>
        <taxon>Euteleostomi</taxon>
        <taxon>Mammalia</taxon>
        <taxon>Eutheria</taxon>
        <taxon>Euarchontoglires</taxon>
        <taxon>Glires</taxon>
        <taxon>Rodentia</taxon>
        <taxon>Myomorpha</taxon>
        <taxon>Muroidea</taxon>
        <taxon>Muridae</taxon>
        <taxon>Murinae</taxon>
        <taxon>Mus</taxon>
        <taxon>Mus</taxon>
    </lineage>
</organism>
<name>CDA7L_MOUSE</name>
<accession>Q922M5</accession>
<proteinExistence type="evidence at protein level"/>